<evidence type="ECO:0000255" key="1">
    <source>
        <dbReference type="HAMAP-Rule" id="MF_00753"/>
    </source>
</evidence>
<name>GLPB_SHISS</name>
<feature type="chain" id="PRO_0000258909" description="Anaerobic glycerol-3-phosphate dehydrogenase subunit B">
    <location>
        <begin position="1"/>
        <end position="419"/>
    </location>
</feature>
<accession>Q3YZW4</accession>
<sequence length="419" mass="45415">MRFDTVIMGGGLAGLLCGLQLQKHGLRCAIVTRGQSALHFSSGSLDLLSHLPDGQPVTDIHSGLESLRQQAPAHPYSLLEPQRVLDLACQAQALIAESGAQLQGSVELAHQRVTPLGTLRATWLSSPEVPVWPLPAKKICVVGISGLMDFQAHLAAASLRELDLSVETAEIELPELDVLRNNATEFRAVNIARFLDNEENWPLLLDALIPVANTCEMILMPACFGLADDKLWRWLNEKLPCSLMLLPTLPPSVLGIRLQNQLQRQFVRQGGVWMPGDEVKKVTCKNGVVNEIWTRNHADIPLRPRFAVLASGSFFSGGLVAERNGIREPILGLDVLQTATRGEWYKGDFFAPQPWQQFGVTTDETLRPSQAGQTIENLFAIGSVLGGFDPIAQGCGGGVCAVSALHAAQQIAQRAGGQQ</sequence>
<gene>
    <name evidence="1" type="primary">glpB</name>
    <name type="ordered locus">SSON_2303</name>
</gene>
<organism>
    <name type="scientific">Shigella sonnei (strain Ss046)</name>
    <dbReference type="NCBI Taxonomy" id="300269"/>
    <lineage>
        <taxon>Bacteria</taxon>
        <taxon>Pseudomonadati</taxon>
        <taxon>Pseudomonadota</taxon>
        <taxon>Gammaproteobacteria</taxon>
        <taxon>Enterobacterales</taxon>
        <taxon>Enterobacteriaceae</taxon>
        <taxon>Shigella</taxon>
    </lineage>
</organism>
<reference key="1">
    <citation type="journal article" date="2005" name="Nucleic Acids Res.">
        <title>Genome dynamics and diversity of Shigella species, the etiologic agents of bacillary dysentery.</title>
        <authorList>
            <person name="Yang F."/>
            <person name="Yang J."/>
            <person name="Zhang X."/>
            <person name="Chen L."/>
            <person name="Jiang Y."/>
            <person name="Yan Y."/>
            <person name="Tang X."/>
            <person name="Wang J."/>
            <person name="Xiong Z."/>
            <person name="Dong J."/>
            <person name="Xue Y."/>
            <person name="Zhu Y."/>
            <person name="Xu X."/>
            <person name="Sun L."/>
            <person name="Chen S."/>
            <person name="Nie H."/>
            <person name="Peng J."/>
            <person name="Xu J."/>
            <person name="Wang Y."/>
            <person name="Yuan Z."/>
            <person name="Wen Y."/>
            <person name="Yao Z."/>
            <person name="Shen Y."/>
            <person name="Qiang B."/>
            <person name="Hou Y."/>
            <person name="Yu J."/>
            <person name="Jin Q."/>
        </authorList>
    </citation>
    <scope>NUCLEOTIDE SEQUENCE [LARGE SCALE GENOMIC DNA]</scope>
    <source>
        <strain>Ss046</strain>
    </source>
</reference>
<protein>
    <recommendedName>
        <fullName evidence="1">Anaerobic glycerol-3-phosphate dehydrogenase subunit B</fullName>
        <shortName evidence="1">Anaerobic G-3-P dehydrogenase subunit B</shortName>
        <shortName evidence="1">Anaerobic G3Pdhase B</shortName>
        <ecNumber evidence="1">1.1.5.3</ecNumber>
    </recommendedName>
</protein>
<comment type="function">
    <text evidence="1">Conversion of glycerol 3-phosphate to dihydroxyacetone. Uses fumarate or nitrate as electron acceptor.</text>
</comment>
<comment type="catalytic activity">
    <reaction evidence="1">
        <text>a quinone + sn-glycerol 3-phosphate = dihydroxyacetone phosphate + a quinol</text>
        <dbReference type="Rhea" id="RHEA:18977"/>
        <dbReference type="ChEBI" id="CHEBI:24646"/>
        <dbReference type="ChEBI" id="CHEBI:57597"/>
        <dbReference type="ChEBI" id="CHEBI:57642"/>
        <dbReference type="ChEBI" id="CHEBI:132124"/>
        <dbReference type="EC" id="1.1.5.3"/>
    </reaction>
</comment>
<comment type="cofactor">
    <cofactor evidence="1">
        <name>FMN</name>
        <dbReference type="ChEBI" id="CHEBI:58210"/>
    </cofactor>
</comment>
<comment type="pathway">
    <text evidence="1">Polyol metabolism; glycerol degradation via glycerol kinase pathway; glycerone phosphate from sn-glycerol 3-phosphate (anaerobic route): step 1/1.</text>
</comment>
<comment type="subunit">
    <text evidence="1">Composed of a catalytic GlpA/B dimer and of membrane bound GlpC.</text>
</comment>
<comment type="similarity">
    <text evidence="1">Belongs to the anaerobic G-3-P dehydrogenase subunit B family.</text>
</comment>
<proteinExistence type="inferred from homology"/>
<keyword id="KW-0285">Flavoprotein</keyword>
<keyword id="KW-0288">FMN</keyword>
<keyword id="KW-0560">Oxidoreductase</keyword>
<keyword id="KW-1185">Reference proteome</keyword>
<dbReference type="EC" id="1.1.5.3" evidence="1"/>
<dbReference type="EMBL" id="CP000038">
    <property type="protein sequence ID" value="AAZ88948.1"/>
    <property type="molecule type" value="Genomic_DNA"/>
</dbReference>
<dbReference type="RefSeq" id="WP_001209921.1">
    <property type="nucleotide sequence ID" value="NC_007384.1"/>
</dbReference>
<dbReference type="GeneID" id="93774932"/>
<dbReference type="KEGG" id="ssn:SSON_2303"/>
<dbReference type="HOGENOM" id="CLU_047793_0_0_6"/>
<dbReference type="UniPathway" id="UPA00618">
    <property type="reaction ID" value="UER00673"/>
</dbReference>
<dbReference type="Proteomes" id="UP000002529">
    <property type="component" value="Chromosome"/>
</dbReference>
<dbReference type="GO" id="GO:0009331">
    <property type="term" value="C:glycerol-3-phosphate dehydrogenase (FAD) complex"/>
    <property type="evidence" value="ECO:0007669"/>
    <property type="project" value="InterPro"/>
</dbReference>
<dbReference type="GO" id="GO:0004368">
    <property type="term" value="F:glycerol-3-phosphate dehydrogenase (quinone) activity"/>
    <property type="evidence" value="ECO:0007669"/>
    <property type="project" value="UniProtKB-UniRule"/>
</dbReference>
<dbReference type="GO" id="GO:0009061">
    <property type="term" value="P:anaerobic respiration"/>
    <property type="evidence" value="ECO:0007669"/>
    <property type="project" value="TreeGrafter"/>
</dbReference>
<dbReference type="GO" id="GO:0019563">
    <property type="term" value="P:glycerol catabolic process"/>
    <property type="evidence" value="ECO:0007669"/>
    <property type="project" value="UniProtKB-UniRule"/>
</dbReference>
<dbReference type="GO" id="GO:0046168">
    <property type="term" value="P:glycerol-3-phosphate catabolic process"/>
    <property type="evidence" value="ECO:0007669"/>
    <property type="project" value="TreeGrafter"/>
</dbReference>
<dbReference type="Gene3D" id="3.50.50.60">
    <property type="entry name" value="FAD/NAD(P)-binding domain"/>
    <property type="match status" value="1"/>
</dbReference>
<dbReference type="HAMAP" id="MF_00753">
    <property type="entry name" value="Glycerol3P_GlpB"/>
    <property type="match status" value="1"/>
</dbReference>
<dbReference type="InterPro" id="IPR003953">
    <property type="entry name" value="FAD-dep_OxRdtase_2_FAD-bd"/>
</dbReference>
<dbReference type="InterPro" id="IPR050315">
    <property type="entry name" value="FAD-oxidoreductase_2"/>
</dbReference>
<dbReference type="InterPro" id="IPR036188">
    <property type="entry name" value="FAD/NAD-bd_sf"/>
</dbReference>
<dbReference type="InterPro" id="IPR009158">
    <property type="entry name" value="G3P_DH_GlpB_su"/>
</dbReference>
<dbReference type="NCBIfam" id="TIGR03378">
    <property type="entry name" value="glycerol3P_GlpB"/>
    <property type="match status" value="1"/>
</dbReference>
<dbReference type="NCBIfam" id="NF003718">
    <property type="entry name" value="PRK05329.1-1"/>
    <property type="match status" value="1"/>
</dbReference>
<dbReference type="NCBIfam" id="NF003719">
    <property type="entry name" value="PRK05329.1-2"/>
    <property type="match status" value="1"/>
</dbReference>
<dbReference type="NCBIfam" id="NF003720">
    <property type="entry name" value="PRK05329.1-3"/>
    <property type="match status" value="1"/>
</dbReference>
<dbReference type="NCBIfam" id="NF003721">
    <property type="entry name" value="PRK05329.1-4"/>
    <property type="match status" value="1"/>
</dbReference>
<dbReference type="PANTHER" id="PTHR43400:SF11">
    <property type="entry name" value="ANAEROBIC GLYCEROL-3-PHOSPHATE DEHYDROGENASE SUBUNIT B"/>
    <property type="match status" value="1"/>
</dbReference>
<dbReference type="PANTHER" id="PTHR43400">
    <property type="entry name" value="FUMARATE REDUCTASE"/>
    <property type="match status" value="1"/>
</dbReference>
<dbReference type="Pfam" id="PF00890">
    <property type="entry name" value="FAD_binding_2"/>
    <property type="match status" value="1"/>
</dbReference>
<dbReference type="PIRSF" id="PIRSF000141">
    <property type="entry name" value="Anaerobic_G3P_dh"/>
    <property type="match status" value="1"/>
</dbReference>
<dbReference type="SUPFAM" id="SSF51905">
    <property type="entry name" value="FAD/NAD(P)-binding domain"/>
    <property type="match status" value="1"/>
</dbReference>